<keyword id="KW-1003">Cell membrane</keyword>
<keyword id="KW-0325">Glycoprotein</keyword>
<keyword id="KW-0336">GPI-anchor</keyword>
<keyword id="KW-0449">Lipoprotein</keyword>
<keyword id="KW-0472">Membrane</keyword>
<keyword id="KW-1185">Reference proteome</keyword>
<keyword id="KW-0964">Secreted</keyword>
<keyword id="KW-0732">Signal</keyword>
<comment type="function">
    <text evidence="2">Secreted protein specifically required to prevent invasion of Gram-negative bacteria in the inner mucus layer of the colon epithelium, a portion of the large intestine which is free of commensal microbiota. Prevents invasion of flagellated microbiota by binding to the flagellum of bacteria, such as P.mirabilis, thereby inhibiting bacterial motility in the intestinal lumen. Segregation of intestinal bacteria and epithelial cells in the colon is required to preserve intestinal homeostasis.</text>
</comment>
<comment type="subcellular location">
    <subcellularLocation>
        <location evidence="3">Cell membrane</location>
        <topology evidence="2">Lipid-anchor</topology>
        <topology evidence="2">GPI-anchor</topology>
    </subcellularLocation>
    <subcellularLocation>
        <location evidence="2">Secreted</location>
    </subcellularLocation>
    <text evidence="2">Secreted into the lumen of the colon following cleavage of the GPI-anchor.</text>
</comment>
<comment type="tissue specificity">
    <text evidence="2">Specifically present in enterocytes located at the uppermost epithelial layer of the colon (at protein level). Exclusively expressed in the large intestine: specifically expressed on the apical surface of epithelial cells located at the uppermost layer of the colonic gland.</text>
</comment>
<comment type="PTM">
    <text evidence="2">Highly N-glycosylated. Not O-glycosylated.</text>
</comment>
<comment type="PTM">
    <text evidence="2">GPI-anchored. The GPI-anchor is cleaved, leading to secretion into the colonic lumen.</text>
</comment>
<comment type="disruption phenotype">
    <text evidence="2">Mice are highly sensitive to intestinal inflammation induced by dextran sulfate sodium (DSS), due to the presence of bacteria in the inner mucus layer. Mice are healthy when raised in a specific-pathogen-free environment, in which bacterial contamination was strictly controlled.</text>
</comment>
<comment type="similarity">
    <text evidence="3">Belongs to the CNF-like-inhibitor family.</text>
</comment>
<name>LYPD8_MOUSE</name>
<evidence type="ECO:0000255" key="1"/>
<evidence type="ECO:0000269" key="2">
    <source>
    </source>
</evidence>
<evidence type="ECO:0000305" key="3"/>
<evidence type="ECO:0000312" key="4">
    <source>
        <dbReference type="MGI" id="MGI:1917413"/>
    </source>
</evidence>
<accession>Q9D7S0</accession>
<proteinExistence type="evidence at protein level"/>
<sequence>MRGVFIAGVIAAFAITVVDSLNCTQCYTYNSTCDGQATECNEQSFSCVESSINSTLGGFLHVYQNKFCSASNCTENSTEVAFTVHLFDDQRYHFASQCCQGESCNATHSESGTQNVTDMQCMSCYGHNKTLCEEKPQKCYEGEQCVFIIAEMVNGSGRVELKGCSDISNSTCQFLSPGNTTVGEFVFKSVECTQPTEYTNSTTTIPPITNTSLTSVTRPGIKTSPASVTPQASMGTKASFTSSIFGSLLLLKLLF</sequence>
<gene>
    <name evidence="4" type="primary">Lypd8</name>
</gene>
<protein>
    <recommendedName>
        <fullName evidence="3">Ly6/PLAUR domain-containing protein 8</fullName>
    </recommendedName>
</protein>
<feature type="signal peptide" evidence="1">
    <location>
        <begin position="1"/>
        <end position="20"/>
    </location>
</feature>
<feature type="chain" id="PRO_0000317741" description="Ly6/PLAUR domain-containing protein 8">
    <location>
        <begin position="21"/>
        <end position="233"/>
    </location>
</feature>
<feature type="propeptide" id="PRO_0000317742" description="Removed in mature form" evidence="1">
    <location>
        <begin position="234"/>
        <end position="255"/>
    </location>
</feature>
<feature type="domain" description="UPAR/Ly6">
    <location>
        <begin position="121"/>
        <end position="170"/>
    </location>
</feature>
<feature type="lipid moiety-binding region" description="GPI-anchor amidated serine" evidence="1">
    <location>
        <position position="233"/>
    </location>
</feature>
<feature type="glycosylation site" description="N-linked (GlcNAc...) asparagine" evidence="1">
    <location>
        <position position="22"/>
    </location>
</feature>
<feature type="glycosylation site" description="N-linked (GlcNAc...) asparagine" evidence="1">
    <location>
        <position position="30"/>
    </location>
</feature>
<feature type="glycosylation site" description="N-linked (GlcNAc...) asparagine" evidence="1">
    <location>
        <position position="53"/>
    </location>
</feature>
<feature type="glycosylation site" description="N-linked (GlcNAc...) asparagine" evidence="1">
    <location>
        <position position="72"/>
    </location>
</feature>
<feature type="glycosylation site" description="N-linked (GlcNAc...) asparagine" evidence="1">
    <location>
        <position position="76"/>
    </location>
</feature>
<feature type="glycosylation site" description="N-linked (GlcNAc...) asparagine" evidence="1">
    <location>
        <position position="105"/>
    </location>
</feature>
<feature type="glycosylation site" description="N-linked (GlcNAc...) asparagine" evidence="1">
    <location>
        <position position="115"/>
    </location>
</feature>
<feature type="glycosylation site" description="N-linked (GlcNAc...) asparagine" evidence="1">
    <location>
        <position position="128"/>
    </location>
</feature>
<feature type="glycosylation site" description="N-linked (GlcNAc...) asparagine" evidence="1">
    <location>
        <position position="154"/>
    </location>
</feature>
<feature type="glycosylation site" description="N-linked (GlcNAc...) asparagine" evidence="1">
    <location>
        <position position="169"/>
    </location>
</feature>
<feature type="glycosylation site" description="N-linked (GlcNAc...) asparagine" evidence="1">
    <location>
        <position position="179"/>
    </location>
</feature>
<feature type="glycosylation site" description="N-linked (GlcNAc...) asparagine" evidence="1">
    <location>
        <position position="200"/>
    </location>
</feature>
<feature type="glycosylation site" description="N-linked (GlcNAc...) asparagine" evidence="1">
    <location>
        <position position="210"/>
    </location>
</feature>
<feature type="mutagenesis site" description="In mutant N-D: Abolished N-glycosylation; when associated with D-30; D-53; D-72; D-76; D-105; D-115; D-128; D-154; D-169; D-179; D-200 and D-210." evidence="2">
    <original>N</original>
    <variation>D</variation>
    <location>
        <position position="22"/>
    </location>
</feature>
<feature type="mutagenesis site" description="In mutant N-D: Abolished N-glycosylation; when associated with D-22; D-53; D-72; D-76; D-105; D-115; D-128; D-154; D-169; D-179; D-200 and D-210." evidence="2">
    <original>N</original>
    <variation>D</variation>
    <location>
        <position position="30"/>
    </location>
</feature>
<feature type="mutagenesis site" description="In mutant N-D: Abolished N-glycosylation; when associated with D-22; D-30; D-72; D-76; D-105; D-115; D-128; D-154; D-169; D-179; D-200 and D-210." evidence="2">
    <original>N</original>
    <variation>D</variation>
    <location>
        <position position="53"/>
    </location>
</feature>
<feature type="mutagenesis site" description="In mutant N-D: Abolished N-glycosylation; when associated with D-22; D-30; D-53; D-76; D-105; D-115; D-128; D-154; D-169; D-179; D-200 and D-210." evidence="2">
    <original>N</original>
    <variation>D</variation>
    <location>
        <position position="72"/>
    </location>
</feature>
<feature type="mutagenesis site" description="In mutant N-D: Abolished N-glycosylation; when associated with D-22; D-30; D-53; D-72; D-105; D-115; D-128; D-154; D-169; D-179; D-200 and D-210." evidence="2">
    <original>N</original>
    <variation>D</variation>
    <location>
        <position position="76"/>
    </location>
</feature>
<feature type="mutagenesis site" description="In mutant N-D: Abolished N-glycosylation; when associated with D-22; D-30; D-53; D-72; D-76; D-115; D-128; D-154; D-169; D-179; D-200 and D-210." evidence="2">
    <original>N</original>
    <variation>D</variation>
    <location>
        <position position="105"/>
    </location>
</feature>
<feature type="mutagenesis site" description="In mutant N-D: Abolished N-glycosylation; when associated with D-22; D-30; D-53; D-72; D-76; D-105; D-128; D-154; D-169; D-179; D-200 and D-210." evidence="2">
    <original>N</original>
    <variation>D</variation>
    <location>
        <position position="115"/>
    </location>
</feature>
<feature type="mutagenesis site" description="In mutant N-D: Abolished N-glycosylation; when associated with D-22; D-30; D-53; D-72; D-76; D-105; D-115; D-154; D-169; D-179; D-200 and D-210." evidence="2">
    <original>N</original>
    <variation>D</variation>
    <location>
        <position position="128"/>
    </location>
</feature>
<feature type="mutagenesis site" description="In mutant N-D: Abolished N-glycosylation; when associated with D-22; D-30; D-53; D-72; D-76; D-105; D-115; D-128; D-169; D-179; D-200 and D-210." evidence="2">
    <original>N</original>
    <variation>D</variation>
    <location>
        <position position="154"/>
    </location>
</feature>
<feature type="mutagenesis site" description="In mutant N-D: Abolished N-glycosylation; when associated with D-22; D-30; D-53; D-72; D-76; D-105; D-115; D-128; D-154; D-179; D-200 and D-210." evidence="2">
    <original>N</original>
    <variation>D</variation>
    <location>
        <position position="169"/>
    </location>
</feature>
<feature type="mutagenesis site" description="In mutant N-D: Abolished N-glycosylation; when associated with D-22; D-30; D-53; D-72; D-76; D-105; D-115; D-128; D-154; D-169; D-200 and D-210." evidence="2">
    <original>N</original>
    <variation>D</variation>
    <location>
        <position position="179"/>
    </location>
</feature>
<feature type="mutagenesis site" description="In mutant N-D: Abolished N-glycosylation; when associated with D-22; D-30; D-53; D-72; D-76; D-105; D-115; D-128; D-154; D-169; D-179 and D-210." evidence="2">
    <original>N</original>
    <variation>D</variation>
    <location>
        <position position="200"/>
    </location>
</feature>
<feature type="mutagenesis site" description="In mutant N-D: Abolished N-glycosylation; when associated with D-22; D-30; D-53; D-72; D-76; D-105; D-115; D-128; D-154; D-169; D-179 and D-200." evidence="2">
    <original>N</original>
    <variation>D</variation>
    <location>
        <position position="210"/>
    </location>
</feature>
<dbReference type="EMBL" id="AK008940">
    <property type="protein sequence ID" value="BAB25981.1"/>
    <property type="molecule type" value="mRNA"/>
</dbReference>
<dbReference type="EMBL" id="AL663107">
    <property type="status" value="NOT_ANNOTATED_CDS"/>
    <property type="molecule type" value="Genomic_DNA"/>
</dbReference>
<dbReference type="CCDS" id="CCDS36163.1"/>
<dbReference type="RefSeq" id="NP_001077353.1">
    <property type="nucleotide sequence ID" value="NM_001083884.2"/>
</dbReference>
<dbReference type="RefSeq" id="NP_001317126.1">
    <property type="nucleotide sequence ID" value="NM_001330197.2"/>
</dbReference>
<dbReference type="RefSeq" id="NP_081615.2">
    <property type="nucleotide sequence ID" value="NM_027339.3"/>
</dbReference>
<dbReference type="FunCoup" id="Q9D7S0">
    <property type="interactions" value="253"/>
</dbReference>
<dbReference type="STRING" id="10090.ENSMUSP00000104454"/>
<dbReference type="GlyCosmos" id="Q9D7S0">
    <property type="glycosylation" value="13 sites, No reported glycans"/>
</dbReference>
<dbReference type="GlyGen" id="Q9D7S0">
    <property type="glycosylation" value="13 sites"/>
</dbReference>
<dbReference type="PhosphoSitePlus" id="Q9D7S0"/>
<dbReference type="PaxDb" id="10090-ENSMUSP00000104454"/>
<dbReference type="ProteomicsDB" id="287279"/>
<dbReference type="Ensembl" id="ENSMUST00000013787.11">
    <property type="protein sequence ID" value="ENSMUSP00000013787.5"/>
    <property type="gene ID" value="ENSMUSG00000013643.14"/>
</dbReference>
<dbReference type="Ensembl" id="ENSMUST00000108826.3">
    <property type="protein sequence ID" value="ENSMUSP00000104454.3"/>
    <property type="gene ID" value="ENSMUSG00000013643.14"/>
</dbReference>
<dbReference type="GeneID" id="70163"/>
<dbReference type="KEGG" id="mmu:70163"/>
<dbReference type="UCSC" id="uc007jbj.1">
    <property type="organism name" value="mouse"/>
</dbReference>
<dbReference type="AGR" id="MGI:1917413"/>
<dbReference type="CTD" id="646627"/>
<dbReference type="MGI" id="MGI:1917413">
    <property type="gene designation" value="Lypd8"/>
</dbReference>
<dbReference type="VEuPathDB" id="HostDB:ENSMUSG00000013643"/>
<dbReference type="eggNOG" id="ENOG502TBDM">
    <property type="taxonomic scope" value="Eukaryota"/>
</dbReference>
<dbReference type="GeneTree" id="ENSGT00570000079564"/>
<dbReference type="HOGENOM" id="CLU_107635_0_0_1"/>
<dbReference type="InParanoid" id="Q9D7S0"/>
<dbReference type="OMA" id="FHFASQC"/>
<dbReference type="OrthoDB" id="9838086at2759"/>
<dbReference type="PhylomeDB" id="Q9D7S0"/>
<dbReference type="TreeFam" id="TF339495"/>
<dbReference type="Reactome" id="R-MMU-163125">
    <property type="pathway name" value="Post-translational modification: synthesis of GPI-anchored proteins"/>
</dbReference>
<dbReference type="BioGRID-ORCS" id="70163">
    <property type="hits" value="2 hits in 76 CRISPR screens"/>
</dbReference>
<dbReference type="PRO" id="PR:Q9D7S0"/>
<dbReference type="Proteomes" id="UP000000589">
    <property type="component" value="Chromosome 11"/>
</dbReference>
<dbReference type="RNAct" id="Q9D7S0">
    <property type="molecule type" value="protein"/>
</dbReference>
<dbReference type="Bgee" id="ENSMUSG00000013643">
    <property type="expression patterns" value="Expressed in left colon and 50 other cell types or tissues"/>
</dbReference>
<dbReference type="GO" id="GO:0005615">
    <property type="term" value="C:extracellular space"/>
    <property type="evidence" value="ECO:0000314"/>
    <property type="project" value="UniProtKB"/>
</dbReference>
<dbReference type="GO" id="GO:0005886">
    <property type="term" value="C:plasma membrane"/>
    <property type="evidence" value="ECO:0007669"/>
    <property type="project" value="UniProtKB-SubCell"/>
</dbReference>
<dbReference type="GO" id="GO:0098552">
    <property type="term" value="C:side of membrane"/>
    <property type="evidence" value="ECO:0007669"/>
    <property type="project" value="UniProtKB-KW"/>
</dbReference>
<dbReference type="GO" id="GO:0050829">
    <property type="term" value="P:defense response to Gram-negative bacterium"/>
    <property type="evidence" value="ECO:0000315"/>
    <property type="project" value="UniProtKB"/>
</dbReference>
<dbReference type="CDD" id="cd23568">
    <property type="entry name" value="TFP_LU_ECD_LYPD8_rpt1"/>
    <property type="match status" value="1"/>
</dbReference>
<dbReference type="CDD" id="cd23569">
    <property type="entry name" value="TFP_LU_ECD_LYPD8_rpt2"/>
    <property type="match status" value="1"/>
</dbReference>
<dbReference type="InterPro" id="IPR050918">
    <property type="entry name" value="CNF-like_PLA2_Inhibitor"/>
</dbReference>
<dbReference type="InterPro" id="IPR016054">
    <property type="entry name" value="LY6_UPA_recep-like"/>
</dbReference>
<dbReference type="InterPro" id="IPR045860">
    <property type="entry name" value="Snake_toxin-like_sf"/>
</dbReference>
<dbReference type="PANTHER" id="PTHR20914">
    <property type="entry name" value="LY6/PLAUR DOMAIN-CONTAINING PROTEIN 8"/>
    <property type="match status" value="1"/>
</dbReference>
<dbReference type="PANTHER" id="PTHR20914:SF2">
    <property type="entry name" value="LY6_PLAUR DOMAIN-CONTAINING PROTEIN 8"/>
    <property type="match status" value="1"/>
</dbReference>
<dbReference type="Pfam" id="PF00021">
    <property type="entry name" value="UPAR_LY6"/>
    <property type="match status" value="2"/>
</dbReference>
<dbReference type="SUPFAM" id="SSF57302">
    <property type="entry name" value="Snake toxin-like"/>
    <property type="match status" value="1"/>
</dbReference>
<organism>
    <name type="scientific">Mus musculus</name>
    <name type="common">Mouse</name>
    <dbReference type="NCBI Taxonomy" id="10090"/>
    <lineage>
        <taxon>Eukaryota</taxon>
        <taxon>Metazoa</taxon>
        <taxon>Chordata</taxon>
        <taxon>Craniata</taxon>
        <taxon>Vertebrata</taxon>
        <taxon>Euteleostomi</taxon>
        <taxon>Mammalia</taxon>
        <taxon>Eutheria</taxon>
        <taxon>Euarchontoglires</taxon>
        <taxon>Glires</taxon>
        <taxon>Rodentia</taxon>
        <taxon>Myomorpha</taxon>
        <taxon>Muroidea</taxon>
        <taxon>Muridae</taxon>
        <taxon>Murinae</taxon>
        <taxon>Mus</taxon>
        <taxon>Mus</taxon>
    </lineage>
</organism>
<reference key="1">
    <citation type="journal article" date="2005" name="Science">
        <title>The transcriptional landscape of the mammalian genome.</title>
        <authorList>
            <person name="Carninci P."/>
            <person name="Kasukawa T."/>
            <person name="Katayama S."/>
            <person name="Gough J."/>
            <person name="Frith M.C."/>
            <person name="Maeda N."/>
            <person name="Oyama R."/>
            <person name="Ravasi T."/>
            <person name="Lenhard B."/>
            <person name="Wells C."/>
            <person name="Kodzius R."/>
            <person name="Shimokawa K."/>
            <person name="Bajic V.B."/>
            <person name="Brenner S.E."/>
            <person name="Batalov S."/>
            <person name="Forrest A.R."/>
            <person name="Zavolan M."/>
            <person name="Davis M.J."/>
            <person name="Wilming L.G."/>
            <person name="Aidinis V."/>
            <person name="Allen J.E."/>
            <person name="Ambesi-Impiombato A."/>
            <person name="Apweiler R."/>
            <person name="Aturaliya R.N."/>
            <person name="Bailey T.L."/>
            <person name="Bansal M."/>
            <person name="Baxter L."/>
            <person name="Beisel K.W."/>
            <person name="Bersano T."/>
            <person name="Bono H."/>
            <person name="Chalk A.M."/>
            <person name="Chiu K.P."/>
            <person name="Choudhary V."/>
            <person name="Christoffels A."/>
            <person name="Clutterbuck D.R."/>
            <person name="Crowe M.L."/>
            <person name="Dalla E."/>
            <person name="Dalrymple B.P."/>
            <person name="de Bono B."/>
            <person name="Della Gatta G."/>
            <person name="di Bernardo D."/>
            <person name="Down T."/>
            <person name="Engstrom P."/>
            <person name="Fagiolini M."/>
            <person name="Faulkner G."/>
            <person name="Fletcher C.F."/>
            <person name="Fukushima T."/>
            <person name="Furuno M."/>
            <person name="Futaki S."/>
            <person name="Gariboldi M."/>
            <person name="Georgii-Hemming P."/>
            <person name="Gingeras T.R."/>
            <person name="Gojobori T."/>
            <person name="Green R.E."/>
            <person name="Gustincich S."/>
            <person name="Harbers M."/>
            <person name="Hayashi Y."/>
            <person name="Hensch T.K."/>
            <person name="Hirokawa N."/>
            <person name="Hill D."/>
            <person name="Huminiecki L."/>
            <person name="Iacono M."/>
            <person name="Ikeo K."/>
            <person name="Iwama A."/>
            <person name="Ishikawa T."/>
            <person name="Jakt M."/>
            <person name="Kanapin A."/>
            <person name="Katoh M."/>
            <person name="Kawasawa Y."/>
            <person name="Kelso J."/>
            <person name="Kitamura H."/>
            <person name="Kitano H."/>
            <person name="Kollias G."/>
            <person name="Krishnan S.P."/>
            <person name="Kruger A."/>
            <person name="Kummerfeld S.K."/>
            <person name="Kurochkin I.V."/>
            <person name="Lareau L.F."/>
            <person name="Lazarevic D."/>
            <person name="Lipovich L."/>
            <person name="Liu J."/>
            <person name="Liuni S."/>
            <person name="McWilliam S."/>
            <person name="Madan Babu M."/>
            <person name="Madera M."/>
            <person name="Marchionni L."/>
            <person name="Matsuda H."/>
            <person name="Matsuzawa S."/>
            <person name="Miki H."/>
            <person name="Mignone F."/>
            <person name="Miyake S."/>
            <person name="Morris K."/>
            <person name="Mottagui-Tabar S."/>
            <person name="Mulder N."/>
            <person name="Nakano N."/>
            <person name="Nakauchi H."/>
            <person name="Ng P."/>
            <person name="Nilsson R."/>
            <person name="Nishiguchi S."/>
            <person name="Nishikawa S."/>
            <person name="Nori F."/>
            <person name="Ohara O."/>
            <person name="Okazaki Y."/>
            <person name="Orlando V."/>
            <person name="Pang K.C."/>
            <person name="Pavan W.J."/>
            <person name="Pavesi G."/>
            <person name="Pesole G."/>
            <person name="Petrovsky N."/>
            <person name="Piazza S."/>
            <person name="Reed J."/>
            <person name="Reid J.F."/>
            <person name="Ring B.Z."/>
            <person name="Ringwald M."/>
            <person name="Rost B."/>
            <person name="Ruan Y."/>
            <person name="Salzberg S.L."/>
            <person name="Sandelin A."/>
            <person name="Schneider C."/>
            <person name="Schoenbach C."/>
            <person name="Sekiguchi K."/>
            <person name="Semple C.A."/>
            <person name="Seno S."/>
            <person name="Sessa L."/>
            <person name="Sheng Y."/>
            <person name="Shibata Y."/>
            <person name="Shimada H."/>
            <person name="Shimada K."/>
            <person name="Silva D."/>
            <person name="Sinclair B."/>
            <person name="Sperling S."/>
            <person name="Stupka E."/>
            <person name="Sugiura K."/>
            <person name="Sultana R."/>
            <person name="Takenaka Y."/>
            <person name="Taki K."/>
            <person name="Tammoja K."/>
            <person name="Tan S.L."/>
            <person name="Tang S."/>
            <person name="Taylor M.S."/>
            <person name="Tegner J."/>
            <person name="Teichmann S.A."/>
            <person name="Ueda H.R."/>
            <person name="van Nimwegen E."/>
            <person name="Verardo R."/>
            <person name="Wei C.L."/>
            <person name="Yagi K."/>
            <person name="Yamanishi H."/>
            <person name="Zabarovsky E."/>
            <person name="Zhu S."/>
            <person name="Zimmer A."/>
            <person name="Hide W."/>
            <person name="Bult C."/>
            <person name="Grimmond S.M."/>
            <person name="Teasdale R.D."/>
            <person name="Liu E.T."/>
            <person name="Brusic V."/>
            <person name="Quackenbush J."/>
            <person name="Wahlestedt C."/>
            <person name="Mattick J.S."/>
            <person name="Hume D.A."/>
            <person name="Kai C."/>
            <person name="Sasaki D."/>
            <person name="Tomaru Y."/>
            <person name="Fukuda S."/>
            <person name="Kanamori-Katayama M."/>
            <person name="Suzuki M."/>
            <person name="Aoki J."/>
            <person name="Arakawa T."/>
            <person name="Iida J."/>
            <person name="Imamura K."/>
            <person name="Itoh M."/>
            <person name="Kato T."/>
            <person name="Kawaji H."/>
            <person name="Kawagashira N."/>
            <person name="Kawashima T."/>
            <person name="Kojima M."/>
            <person name="Kondo S."/>
            <person name="Konno H."/>
            <person name="Nakano K."/>
            <person name="Ninomiya N."/>
            <person name="Nishio T."/>
            <person name="Okada M."/>
            <person name="Plessy C."/>
            <person name="Shibata K."/>
            <person name="Shiraki T."/>
            <person name="Suzuki S."/>
            <person name="Tagami M."/>
            <person name="Waki K."/>
            <person name="Watahiki A."/>
            <person name="Okamura-Oho Y."/>
            <person name="Suzuki H."/>
            <person name="Kawai J."/>
            <person name="Hayashizaki Y."/>
        </authorList>
    </citation>
    <scope>NUCLEOTIDE SEQUENCE [LARGE SCALE MRNA]</scope>
    <source>
        <strain>C57BL/6J</strain>
        <tissue>Stomach</tissue>
    </source>
</reference>
<reference key="2">
    <citation type="journal article" date="2009" name="PLoS Biol.">
        <title>Lineage-specific biology revealed by a finished genome assembly of the mouse.</title>
        <authorList>
            <person name="Church D.M."/>
            <person name="Goodstadt L."/>
            <person name="Hillier L.W."/>
            <person name="Zody M.C."/>
            <person name="Goldstein S."/>
            <person name="She X."/>
            <person name="Bult C.J."/>
            <person name="Agarwala R."/>
            <person name="Cherry J.L."/>
            <person name="DiCuccio M."/>
            <person name="Hlavina W."/>
            <person name="Kapustin Y."/>
            <person name="Meric P."/>
            <person name="Maglott D."/>
            <person name="Birtle Z."/>
            <person name="Marques A.C."/>
            <person name="Graves T."/>
            <person name="Zhou S."/>
            <person name="Teague B."/>
            <person name="Potamousis K."/>
            <person name="Churas C."/>
            <person name="Place M."/>
            <person name="Herschleb J."/>
            <person name="Runnheim R."/>
            <person name="Forrest D."/>
            <person name="Amos-Landgraf J."/>
            <person name="Schwartz D.C."/>
            <person name="Cheng Z."/>
            <person name="Lindblad-Toh K."/>
            <person name="Eichler E.E."/>
            <person name="Ponting C.P."/>
        </authorList>
    </citation>
    <scope>NUCLEOTIDE SEQUENCE [LARGE SCALE GENOMIC DNA]</scope>
    <source>
        <strain>C57BL/6J</strain>
    </source>
</reference>
<reference key="3">
    <citation type="journal article" date="2016" name="Nature">
        <title>Lypd8 promotes the segregation of flagellated microbiota and colonic epithelia.</title>
        <authorList>
            <person name="Okumura R."/>
            <person name="Kurakawa T."/>
            <person name="Nakano T."/>
            <person name="Kayama H."/>
            <person name="Kinoshita M."/>
            <person name="Motooka D."/>
            <person name="Gotoh K."/>
            <person name="Kimura T."/>
            <person name="Kamiyama N."/>
            <person name="Kusu T."/>
            <person name="Ueda Y."/>
            <person name="Wu H."/>
            <person name="Iijima H."/>
            <person name="Barman S."/>
            <person name="Osawa H."/>
            <person name="Matsuno H."/>
            <person name="Nishimura J."/>
            <person name="Ohba Y."/>
            <person name="Nakamura S."/>
            <person name="Iida T."/>
            <person name="Yamamoto M."/>
            <person name="Umemoto E."/>
            <person name="Sano K."/>
            <person name="Takeda K."/>
        </authorList>
    </citation>
    <scope>FUNCTION</scope>
    <scope>SUBCELLULAR LOCATION</scope>
    <scope>GLYCOSYLATION</scope>
    <scope>GPI-ANCHOR</scope>
    <scope>TISSUE SPECIFICITY</scope>
    <scope>DISRUPTION PHENOTYPE</scope>
    <scope>MUTAGENESIS OF ASN-22; ASN-30; ASN-53; ASN-72; ASN-76; ASN-105; ASN-115; ASN-128; ASN-154; ASN-169; ASN-179; ASN-200 AND ASN-210</scope>
</reference>